<evidence type="ECO:0000250" key="1"/>
<evidence type="ECO:0000250" key="2">
    <source>
        <dbReference type="UniProtKB" id="P21555"/>
    </source>
</evidence>
<evidence type="ECO:0000255" key="3"/>
<evidence type="ECO:0000255" key="4">
    <source>
        <dbReference type="PROSITE-ProRule" id="PRU00521"/>
    </source>
</evidence>
<dbReference type="EMBL" id="BC114695">
    <property type="protein sequence ID" value="AAI14696.1"/>
    <property type="molecule type" value="mRNA"/>
</dbReference>
<dbReference type="RefSeq" id="NP_001039363.1">
    <property type="nucleotide sequence ID" value="NM_001045898.1"/>
</dbReference>
<dbReference type="RefSeq" id="XP_005207617.1">
    <property type="nucleotide sequence ID" value="XM_005207560.5"/>
</dbReference>
<dbReference type="RefSeq" id="XP_059743395.1">
    <property type="nucleotide sequence ID" value="XM_059887412.1"/>
</dbReference>
<dbReference type="SMR" id="Q1RMU8"/>
<dbReference type="FunCoup" id="Q1RMU8">
    <property type="interactions" value="357"/>
</dbReference>
<dbReference type="STRING" id="9913.ENSBTAP00000055219"/>
<dbReference type="GlyCosmos" id="Q1RMU8">
    <property type="glycosylation" value="4 sites, No reported glycans"/>
</dbReference>
<dbReference type="GlyGen" id="Q1RMU8">
    <property type="glycosylation" value="4 sites"/>
</dbReference>
<dbReference type="PaxDb" id="9913-ENSBTAP00000055219"/>
<dbReference type="Ensembl" id="ENSBTAT00000066076.2">
    <property type="protein sequence ID" value="ENSBTAP00000055219.1"/>
    <property type="gene ID" value="ENSBTAG00000047586.3"/>
</dbReference>
<dbReference type="GeneID" id="504813"/>
<dbReference type="KEGG" id="bta:504813"/>
<dbReference type="CTD" id="4886"/>
<dbReference type="VEuPathDB" id="HostDB:ENSBTAG00000047586"/>
<dbReference type="VGNC" id="VGNC:32223">
    <property type="gene designation" value="NPY1R"/>
</dbReference>
<dbReference type="eggNOG" id="KOG3656">
    <property type="taxonomic scope" value="Eukaryota"/>
</dbReference>
<dbReference type="GeneTree" id="ENSGT00940000160268"/>
<dbReference type="HOGENOM" id="CLU_009579_6_1_1"/>
<dbReference type="InParanoid" id="Q1RMU8"/>
<dbReference type="OMA" id="QFFFHFC"/>
<dbReference type="OrthoDB" id="9046662at2759"/>
<dbReference type="TreeFam" id="TF315303"/>
<dbReference type="Reactome" id="R-BTA-375276">
    <property type="pathway name" value="Peptide ligand-binding receptors"/>
</dbReference>
<dbReference type="Reactome" id="R-BTA-418594">
    <property type="pathway name" value="G alpha (i) signalling events"/>
</dbReference>
<dbReference type="Proteomes" id="UP000009136">
    <property type="component" value="Chromosome 6"/>
</dbReference>
<dbReference type="Bgee" id="ENSBTAG00000047586">
    <property type="expression patterns" value="Expressed in vas deferens and 93 other cell types or tissues"/>
</dbReference>
<dbReference type="GO" id="GO:0043005">
    <property type="term" value="C:neuron projection"/>
    <property type="evidence" value="ECO:0000318"/>
    <property type="project" value="GO_Central"/>
</dbReference>
<dbReference type="GO" id="GO:0005886">
    <property type="term" value="C:plasma membrane"/>
    <property type="evidence" value="ECO:0000318"/>
    <property type="project" value="GO_Central"/>
</dbReference>
<dbReference type="GO" id="GO:0042923">
    <property type="term" value="F:neuropeptide binding"/>
    <property type="evidence" value="ECO:0000318"/>
    <property type="project" value="GO_Central"/>
</dbReference>
<dbReference type="GO" id="GO:0008188">
    <property type="term" value="F:neuropeptide receptor activity"/>
    <property type="evidence" value="ECO:0000318"/>
    <property type="project" value="GO_Central"/>
</dbReference>
<dbReference type="GO" id="GO:0001602">
    <property type="term" value="F:pancreatic polypeptide receptor activity"/>
    <property type="evidence" value="ECO:0007669"/>
    <property type="project" value="Ensembl"/>
</dbReference>
<dbReference type="GO" id="GO:0001601">
    <property type="term" value="F:peptide YY receptor activity"/>
    <property type="evidence" value="ECO:0007669"/>
    <property type="project" value="Ensembl"/>
</dbReference>
<dbReference type="GO" id="GO:0007631">
    <property type="term" value="P:feeding behavior"/>
    <property type="evidence" value="ECO:0007669"/>
    <property type="project" value="Ensembl"/>
</dbReference>
<dbReference type="GO" id="GO:0006006">
    <property type="term" value="P:glucose metabolic process"/>
    <property type="evidence" value="ECO:0007669"/>
    <property type="project" value="Ensembl"/>
</dbReference>
<dbReference type="GO" id="GO:0007626">
    <property type="term" value="P:locomotory behavior"/>
    <property type="evidence" value="ECO:0007669"/>
    <property type="project" value="Ensembl"/>
</dbReference>
<dbReference type="GO" id="GO:0003151">
    <property type="term" value="P:outflow tract morphogenesis"/>
    <property type="evidence" value="ECO:0007669"/>
    <property type="project" value="Ensembl"/>
</dbReference>
<dbReference type="GO" id="GO:0008217">
    <property type="term" value="P:regulation of blood pressure"/>
    <property type="evidence" value="ECO:0007669"/>
    <property type="project" value="Ensembl"/>
</dbReference>
<dbReference type="GO" id="GO:0040014">
    <property type="term" value="P:regulation of multicellular organism growth"/>
    <property type="evidence" value="ECO:0007669"/>
    <property type="project" value="Ensembl"/>
</dbReference>
<dbReference type="GO" id="GO:0019233">
    <property type="term" value="P:sensory perception of pain"/>
    <property type="evidence" value="ECO:0007669"/>
    <property type="project" value="Ensembl"/>
</dbReference>
<dbReference type="CDD" id="cd15395">
    <property type="entry name" value="7tmA_NPY1R"/>
    <property type="match status" value="1"/>
</dbReference>
<dbReference type="FunFam" id="1.20.1070.10:FF:000062">
    <property type="entry name" value="Neuropeptide Y receptor type 1"/>
    <property type="match status" value="1"/>
</dbReference>
<dbReference type="Gene3D" id="1.20.1070.10">
    <property type="entry name" value="Rhodopsin 7-helix transmembrane proteins"/>
    <property type="match status" value="1"/>
</dbReference>
<dbReference type="InterPro" id="IPR000276">
    <property type="entry name" value="GPCR_Rhodpsn"/>
</dbReference>
<dbReference type="InterPro" id="IPR017452">
    <property type="entry name" value="GPCR_Rhodpsn_7TM"/>
</dbReference>
<dbReference type="InterPro" id="IPR000351">
    <property type="entry name" value="NPY1_rcpt"/>
</dbReference>
<dbReference type="InterPro" id="IPR000611">
    <property type="entry name" value="NPY_rcpt"/>
</dbReference>
<dbReference type="PANTHER" id="PTHR24235">
    <property type="entry name" value="NEUROPEPTIDE Y RECEPTOR"/>
    <property type="match status" value="1"/>
</dbReference>
<dbReference type="PANTHER" id="PTHR24235:SF24">
    <property type="entry name" value="NEUROPEPTIDE Y RECEPTOR TYPE 1"/>
    <property type="match status" value="1"/>
</dbReference>
<dbReference type="Pfam" id="PF00001">
    <property type="entry name" value="7tm_1"/>
    <property type="match status" value="1"/>
</dbReference>
<dbReference type="PRINTS" id="PR00237">
    <property type="entry name" value="GPCRRHODOPSN"/>
</dbReference>
<dbReference type="PRINTS" id="PR01013">
    <property type="entry name" value="NRPEPTIDEY1R"/>
</dbReference>
<dbReference type="PRINTS" id="PR01012">
    <property type="entry name" value="NRPEPTIDEYR"/>
</dbReference>
<dbReference type="SUPFAM" id="SSF81321">
    <property type="entry name" value="Family A G protein-coupled receptor-like"/>
    <property type="match status" value="1"/>
</dbReference>
<dbReference type="PROSITE" id="PS00237">
    <property type="entry name" value="G_PROTEIN_RECEP_F1_1"/>
    <property type="match status" value="1"/>
</dbReference>
<dbReference type="PROSITE" id="PS50262">
    <property type="entry name" value="G_PROTEIN_RECEP_F1_2"/>
    <property type="match status" value="1"/>
</dbReference>
<keyword id="KW-1003">Cell membrane</keyword>
<keyword id="KW-1015">Disulfide bond</keyword>
<keyword id="KW-0297">G-protein coupled receptor</keyword>
<keyword id="KW-0325">Glycoprotein</keyword>
<keyword id="KW-0449">Lipoprotein</keyword>
<keyword id="KW-0472">Membrane</keyword>
<keyword id="KW-0564">Palmitate</keyword>
<keyword id="KW-0597">Phosphoprotein</keyword>
<keyword id="KW-0675">Receptor</keyword>
<keyword id="KW-1185">Reference proteome</keyword>
<keyword id="KW-0807">Transducer</keyword>
<keyword id="KW-0812">Transmembrane</keyword>
<keyword id="KW-1133">Transmembrane helix</keyword>
<gene>
    <name type="primary">NPY1R</name>
</gene>
<protein>
    <recommendedName>
        <fullName>Neuropeptide Y receptor type 1</fullName>
        <shortName>NPY1-R</shortName>
    </recommendedName>
</protein>
<reference key="1">
    <citation type="submission" date="2006-04" db="EMBL/GenBank/DDBJ databases">
        <authorList>
            <consortium name="NIH - Mammalian Gene Collection (MGC) project"/>
        </authorList>
    </citation>
    <scope>NUCLEOTIDE SEQUENCE [LARGE SCALE MRNA]</scope>
    <source>
        <strain>Hereford</strain>
        <tissue>Uterus</tissue>
    </source>
</reference>
<organism>
    <name type="scientific">Bos taurus</name>
    <name type="common">Bovine</name>
    <dbReference type="NCBI Taxonomy" id="9913"/>
    <lineage>
        <taxon>Eukaryota</taxon>
        <taxon>Metazoa</taxon>
        <taxon>Chordata</taxon>
        <taxon>Craniata</taxon>
        <taxon>Vertebrata</taxon>
        <taxon>Euteleostomi</taxon>
        <taxon>Mammalia</taxon>
        <taxon>Eutheria</taxon>
        <taxon>Laurasiatheria</taxon>
        <taxon>Artiodactyla</taxon>
        <taxon>Ruminantia</taxon>
        <taxon>Pecora</taxon>
        <taxon>Bovidae</taxon>
        <taxon>Bovinae</taxon>
        <taxon>Bos</taxon>
    </lineage>
</organism>
<name>NPY1R_BOVIN</name>
<comment type="function">
    <text evidence="1">Receptor for neuropeptide Y and peptide YY.</text>
</comment>
<comment type="subcellular location">
    <subcellularLocation>
        <location>Cell membrane</location>
        <topology>Multi-pass membrane protein</topology>
    </subcellularLocation>
</comment>
<comment type="similarity">
    <text evidence="4">Belongs to the G-protein coupled receptor 1 family.</text>
</comment>
<accession>Q1RMU8</accession>
<sequence length="383" mass="44291">MNSTSFSQVENHSIYYNFSEKNSRFLAFENDDCHLPLAMIFTLALAYGAVIILGVSGNLALIIIILKQKEMRNVTNILIVNLSFSDLLVAIMCLPFTFVYTLMDHWVFGEAMCKLNPFVQCVSITVSIFSLVLIAVERHQLIINPRGWRPNNRHAYVGIAVIWVLAVASSLPFLIYQVLTDEPFQNVTLDAFKDKYVCFDKFPSDSHRLSYTTLLLVLQYFGPLCFIFICYFKIYVRLKRRNSMMDKMRDNKYRSSEAKRINIMLLSIVVAFAVCWLPLTIFNTVFDWDHQIIATCNHNLLFLLCHLTAMISTCVNPIFYGFLNKNFQRDLQFFFSFCDFRSRDDDYETIAMSTMHTDVSKTSLKQASPVALKKIHTDDNEKI</sequence>
<feature type="chain" id="PRO_0000282825" description="Neuropeptide Y receptor type 1">
    <location>
        <begin position="1"/>
        <end position="383"/>
    </location>
</feature>
<feature type="topological domain" description="Extracellular" evidence="3">
    <location>
        <begin position="1"/>
        <end position="44"/>
    </location>
</feature>
<feature type="transmembrane region" description="Helical; Name=1" evidence="3">
    <location>
        <begin position="45"/>
        <end position="65"/>
    </location>
</feature>
<feature type="topological domain" description="Cytoplasmic" evidence="3">
    <location>
        <begin position="66"/>
        <end position="76"/>
    </location>
</feature>
<feature type="transmembrane region" description="Helical; Name=2" evidence="3">
    <location>
        <begin position="77"/>
        <end position="97"/>
    </location>
</feature>
<feature type="topological domain" description="Extracellular" evidence="3">
    <location>
        <begin position="98"/>
        <end position="116"/>
    </location>
</feature>
<feature type="transmembrane region" description="Helical; Name=3" evidence="3">
    <location>
        <begin position="117"/>
        <end position="137"/>
    </location>
</feature>
<feature type="topological domain" description="Cytoplasmic" evidence="3">
    <location>
        <begin position="138"/>
        <end position="154"/>
    </location>
</feature>
<feature type="transmembrane region" description="Helical; Name=4" evidence="3">
    <location>
        <begin position="155"/>
        <end position="175"/>
    </location>
</feature>
<feature type="topological domain" description="Extracellular" evidence="3">
    <location>
        <begin position="176"/>
        <end position="211"/>
    </location>
</feature>
<feature type="transmembrane region" description="Helical; Name=5" evidence="3">
    <location>
        <begin position="212"/>
        <end position="232"/>
    </location>
</feature>
<feature type="topological domain" description="Cytoplasmic" evidence="3">
    <location>
        <begin position="233"/>
        <end position="260"/>
    </location>
</feature>
<feature type="transmembrane region" description="Helical; Name=6" evidence="3">
    <location>
        <begin position="261"/>
        <end position="281"/>
    </location>
</feature>
<feature type="topological domain" description="Extracellular" evidence="3">
    <location>
        <begin position="282"/>
        <end position="299"/>
    </location>
</feature>
<feature type="transmembrane region" description="Helical; Name=7" evidence="3">
    <location>
        <begin position="300"/>
        <end position="320"/>
    </location>
</feature>
<feature type="topological domain" description="Cytoplasmic" evidence="3">
    <location>
        <begin position="321"/>
        <end position="383"/>
    </location>
</feature>
<feature type="modified residue" description="Phosphoserine" evidence="2">
    <location>
        <position position="368"/>
    </location>
</feature>
<feature type="lipid moiety-binding region" description="S-palmitoyl cysteine" evidence="3">
    <location>
        <position position="338"/>
    </location>
</feature>
<feature type="glycosylation site" description="N-linked (GlcNAc...) asparagine" evidence="3">
    <location>
        <position position="2"/>
    </location>
</feature>
<feature type="glycosylation site" description="N-linked (GlcNAc...) asparagine" evidence="3">
    <location>
        <position position="11"/>
    </location>
</feature>
<feature type="glycosylation site" description="N-linked (GlcNAc...) asparagine" evidence="3">
    <location>
        <position position="17"/>
    </location>
</feature>
<feature type="glycosylation site" description="N-linked (GlcNAc...) asparagine" evidence="3">
    <location>
        <position position="186"/>
    </location>
</feature>
<feature type="disulfide bond" evidence="4">
    <location>
        <begin position="113"/>
        <end position="198"/>
    </location>
</feature>
<proteinExistence type="evidence at transcript level"/>